<proteinExistence type="inferred from homology"/>
<dbReference type="EC" id="2.2.1.2" evidence="2"/>
<dbReference type="EMBL" id="AP008232">
    <property type="protein sequence ID" value="BAE74989.1"/>
    <property type="molecule type" value="Genomic_DNA"/>
</dbReference>
<dbReference type="RefSeq" id="WP_011411538.1">
    <property type="nucleotide sequence ID" value="NC_007712.1"/>
</dbReference>
<dbReference type="SMR" id="Q2NS86"/>
<dbReference type="STRING" id="343509.SG1714"/>
<dbReference type="KEGG" id="sgl:SG1714"/>
<dbReference type="eggNOG" id="COG0176">
    <property type="taxonomic scope" value="Bacteria"/>
</dbReference>
<dbReference type="HOGENOM" id="CLU_047470_0_1_6"/>
<dbReference type="OrthoDB" id="9809101at2"/>
<dbReference type="BioCyc" id="SGLO343509:SGP1_RS15580-MONOMER"/>
<dbReference type="UniPathway" id="UPA00115">
    <property type="reaction ID" value="UER00414"/>
</dbReference>
<dbReference type="Proteomes" id="UP000001932">
    <property type="component" value="Chromosome"/>
</dbReference>
<dbReference type="GO" id="GO:0005829">
    <property type="term" value="C:cytosol"/>
    <property type="evidence" value="ECO:0007669"/>
    <property type="project" value="TreeGrafter"/>
</dbReference>
<dbReference type="GO" id="GO:0004801">
    <property type="term" value="F:transaldolase activity"/>
    <property type="evidence" value="ECO:0000250"/>
    <property type="project" value="UniProtKB"/>
</dbReference>
<dbReference type="GO" id="GO:0005975">
    <property type="term" value="P:carbohydrate metabolic process"/>
    <property type="evidence" value="ECO:0007669"/>
    <property type="project" value="InterPro"/>
</dbReference>
<dbReference type="GO" id="GO:0006098">
    <property type="term" value="P:pentose-phosphate shunt"/>
    <property type="evidence" value="ECO:0007669"/>
    <property type="project" value="UniProtKB-UniRule"/>
</dbReference>
<dbReference type="CDD" id="cd00957">
    <property type="entry name" value="Transaldolase_TalAB"/>
    <property type="match status" value="1"/>
</dbReference>
<dbReference type="FunFam" id="3.20.20.70:FF:000002">
    <property type="entry name" value="Transaldolase"/>
    <property type="match status" value="1"/>
</dbReference>
<dbReference type="Gene3D" id="3.20.20.70">
    <property type="entry name" value="Aldolase class I"/>
    <property type="match status" value="1"/>
</dbReference>
<dbReference type="HAMAP" id="MF_00492">
    <property type="entry name" value="Transaldolase_1"/>
    <property type="match status" value="1"/>
</dbReference>
<dbReference type="InterPro" id="IPR013785">
    <property type="entry name" value="Aldolase_TIM"/>
</dbReference>
<dbReference type="InterPro" id="IPR001585">
    <property type="entry name" value="TAL/FSA"/>
</dbReference>
<dbReference type="InterPro" id="IPR004730">
    <property type="entry name" value="Transaldolase_1"/>
</dbReference>
<dbReference type="InterPro" id="IPR018225">
    <property type="entry name" value="Transaldolase_AS"/>
</dbReference>
<dbReference type="NCBIfam" id="NF009001">
    <property type="entry name" value="PRK12346.1"/>
    <property type="match status" value="1"/>
</dbReference>
<dbReference type="NCBIfam" id="TIGR00874">
    <property type="entry name" value="talAB"/>
    <property type="match status" value="1"/>
</dbReference>
<dbReference type="PANTHER" id="PTHR10683">
    <property type="entry name" value="TRANSALDOLASE"/>
    <property type="match status" value="1"/>
</dbReference>
<dbReference type="PANTHER" id="PTHR10683:SF16">
    <property type="entry name" value="TRANSALDOLASE A"/>
    <property type="match status" value="1"/>
</dbReference>
<dbReference type="Pfam" id="PF00923">
    <property type="entry name" value="TAL_FSA"/>
    <property type="match status" value="1"/>
</dbReference>
<dbReference type="SUPFAM" id="SSF51569">
    <property type="entry name" value="Aldolase"/>
    <property type="match status" value="1"/>
</dbReference>
<dbReference type="PROSITE" id="PS01054">
    <property type="entry name" value="TRANSALDOLASE_1"/>
    <property type="match status" value="1"/>
</dbReference>
<dbReference type="PROSITE" id="PS00958">
    <property type="entry name" value="TRANSALDOLASE_2"/>
    <property type="match status" value="1"/>
</dbReference>
<comment type="function">
    <text evidence="2">Transaldolase is important for the balance of metabolites in the pentose-phosphate pathway.</text>
</comment>
<comment type="catalytic activity">
    <reaction evidence="2">
        <text>D-sedoheptulose 7-phosphate + D-glyceraldehyde 3-phosphate = D-erythrose 4-phosphate + beta-D-fructose 6-phosphate</text>
        <dbReference type="Rhea" id="RHEA:17053"/>
        <dbReference type="ChEBI" id="CHEBI:16897"/>
        <dbReference type="ChEBI" id="CHEBI:57483"/>
        <dbReference type="ChEBI" id="CHEBI:57634"/>
        <dbReference type="ChEBI" id="CHEBI:59776"/>
        <dbReference type="EC" id="2.2.1.2"/>
    </reaction>
</comment>
<comment type="pathway">
    <text evidence="2">Carbohydrate degradation; pentose phosphate pathway; D-glyceraldehyde 3-phosphate and beta-D-fructose 6-phosphate from D-ribose 5-phosphate and D-xylulose 5-phosphate (non-oxidative stage): step 2/3.</text>
</comment>
<comment type="subunit">
    <text evidence="1">Homodimer.</text>
</comment>
<comment type="subcellular location">
    <subcellularLocation>
        <location evidence="2">Cytoplasm</location>
    </subcellularLocation>
</comment>
<comment type="similarity">
    <text evidence="2">Belongs to the transaldolase family. Type 1 subfamily.</text>
</comment>
<keyword id="KW-0963">Cytoplasm</keyword>
<keyword id="KW-0570">Pentose shunt</keyword>
<keyword id="KW-0704">Schiff base</keyword>
<keyword id="KW-0808">Transferase</keyword>
<gene>
    <name evidence="2" type="primary">tal</name>
    <name type="ordered locus">SG1714</name>
</gene>
<sequence length="316" mass="35299">MNQLEGLKQFTTVVADSGDIESIRHYTPQDATTNPSLILKAASLTAYQPLFEDTLAYARKQGGTRETQIINASDKLAVNIGVEILKSVPGRVSTEVDARLSFDRGMCVAKARKLVALYQEQGIDKSRILIKLASTWEGIKAAEELEKEGINCNLTLLFSFAQARACAEAGVYLISPFVGRIYDWYNQRKPLDPYVADEDPGVVSVRKIYDYCKQHRYQTVIMGASFRKVEQILALAGCDRLTISTTLLEELHKADTRVERKLSPSTEGFHQPAPLSEPEFRWEHNQDAMAVDKLAEGIRQFAVDQQSLEDLLAAKL</sequence>
<name>TAL_SODGM</name>
<accession>Q2NS86</accession>
<feature type="chain" id="PRO_1000014531" description="Transaldolase">
    <location>
        <begin position="1"/>
        <end position="316"/>
    </location>
</feature>
<feature type="active site" description="Schiff-base intermediate with substrate" evidence="2">
    <location>
        <position position="131"/>
    </location>
</feature>
<organism>
    <name type="scientific">Sodalis glossinidius (strain morsitans)</name>
    <dbReference type="NCBI Taxonomy" id="343509"/>
    <lineage>
        <taxon>Bacteria</taxon>
        <taxon>Pseudomonadati</taxon>
        <taxon>Pseudomonadota</taxon>
        <taxon>Gammaproteobacteria</taxon>
        <taxon>Enterobacterales</taxon>
        <taxon>Bruguierivoracaceae</taxon>
        <taxon>Sodalis</taxon>
    </lineage>
</organism>
<evidence type="ECO:0000250" key="1"/>
<evidence type="ECO:0000255" key="2">
    <source>
        <dbReference type="HAMAP-Rule" id="MF_00492"/>
    </source>
</evidence>
<reference key="1">
    <citation type="journal article" date="2006" name="Genome Res.">
        <title>Massive genome erosion and functional adaptations provide insights into the symbiotic lifestyle of Sodalis glossinidius in the tsetse host.</title>
        <authorList>
            <person name="Toh H."/>
            <person name="Weiss B.L."/>
            <person name="Perkin S.A.H."/>
            <person name="Yamashita A."/>
            <person name="Oshima K."/>
            <person name="Hattori M."/>
            <person name="Aksoy S."/>
        </authorList>
    </citation>
    <scope>NUCLEOTIDE SEQUENCE [LARGE SCALE GENOMIC DNA]</scope>
    <source>
        <strain>morsitans</strain>
    </source>
</reference>
<protein>
    <recommendedName>
        <fullName evidence="2">Transaldolase</fullName>
        <ecNumber evidence="2">2.2.1.2</ecNumber>
    </recommendedName>
</protein>